<accession>Q06991</accession>
<accession>D6VZ51</accession>
<accession>Q6B322</accession>
<comment type="function">
    <text evidence="8">Contributes to the wild-type cellular response to nitrogen stress through signaling pathways that regulate the expression of genes involved in amino acid biosynthesis. Required for wild-type filamentous growth, cell growth, and cell-cell adhesion.</text>
</comment>
<comment type="subcellular location">
    <subcellularLocation>
        <location evidence="2 6 8">Cell membrane</location>
        <topology evidence="2 6 8">Multi-pass membrane protein</topology>
    </subcellularLocation>
    <text>Localizes to punctate patches in the plasma membrane that show extensive colocalization with SUR7.</text>
</comment>
<comment type="induction">
    <text evidence="4 5 8">By the HOG1 MAPK, cell wall perturbations, and nitrogen stress. Expression is controlled by the MSS11 pseudohyphal growth transcription factor.</text>
</comment>
<comment type="PTM">
    <text evidence="7">N-glycosylated.</text>
</comment>
<comment type="miscellaneous">
    <text evidence="3">Present with 1660 molecules/cell in log phase SD medium.</text>
</comment>
<comment type="similarity">
    <text evidence="9">Belongs to the SUR7 family.</text>
</comment>
<gene>
    <name type="primary">PUN1</name>
    <name type="ordered locus">YLR414C</name>
</gene>
<feature type="chain" id="PRO_0000247353" description="Protein PUN1">
    <location>
        <begin position="1"/>
        <end position="263"/>
    </location>
</feature>
<feature type="topological domain" description="Cytoplasmic" evidence="1">
    <location>
        <begin position="1"/>
        <end position="6"/>
    </location>
</feature>
<feature type="transmembrane region" description="Helical" evidence="1">
    <location>
        <begin position="7"/>
        <end position="27"/>
    </location>
</feature>
<feature type="topological domain" description="Extracellular" evidence="1">
    <location>
        <begin position="28"/>
        <end position="143"/>
    </location>
</feature>
<feature type="transmembrane region" description="Helical" evidence="1">
    <location>
        <begin position="144"/>
        <end position="164"/>
    </location>
</feature>
<feature type="topological domain" description="Cytoplasmic" evidence="1">
    <location>
        <begin position="165"/>
        <end position="172"/>
    </location>
</feature>
<feature type="transmembrane region" description="Helical" evidence="1">
    <location>
        <begin position="173"/>
        <end position="193"/>
    </location>
</feature>
<feature type="topological domain" description="Extracellular" evidence="1">
    <location>
        <begin position="194"/>
        <end position="223"/>
    </location>
</feature>
<feature type="transmembrane region" description="Helical" evidence="1">
    <location>
        <begin position="224"/>
        <end position="244"/>
    </location>
</feature>
<feature type="topological domain" description="Cytoplasmic" evidence="1">
    <location>
        <begin position="245"/>
        <end position="263"/>
    </location>
</feature>
<feature type="glycosylation site" description="N-linked (GlcNAc...) asparagine" evidence="1">
    <location>
        <position position="100"/>
    </location>
</feature>
<feature type="glycosylation site" description="N-linked (GlcNAc...) asparagine" evidence="1">
    <location>
        <position position="209"/>
    </location>
</feature>
<feature type="cross-link" description="Glycyl lysine isopeptide (Lys-Gly) (interchain with G-Cter in ubiquitin)" evidence="10">
    <location>
        <position position="260"/>
    </location>
</feature>
<feature type="sequence conflict" description="In Ref. 3; AAT92577." evidence="9" ref="3">
    <original>E</original>
    <variation>K</variation>
    <location>
        <position position="42"/>
    </location>
</feature>
<evidence type="ECO:0000255" key="1"/>
<evidence type="ECO:0000269" key="2">
    <source>
    </source>
</evidence>
<evidence type="ECO:0000269" key="3">
    <source>
    </source>
</evidence>
<evidence type="ECO:0000269" key="4">
    <source>
    </source>
</evidence>
<evidence type="ECO:0000269" key="5">
    <source>
    </source>
</evidence>
<evidence type="ECO:0000269" key="6">
    <source>
    </source>
</evidence>
<evidence type="ECO:0000269" key="7">
    <source>
    </source>
</evidence>
<evidence type="ECO:0000269" key="8">
    <source>
    </source>
</evidence>
<evidence type="ECO:0000305" key="9"/>
<evidence type="ECO:0007744" key="10">
    <source>
    </source>
</evidence>
<dbReference type="EMBL" id="U20162">
    <property type="protein sequence ID" value="AAB67498.1"/>
    <property type="molecule type" value="Genomic_DNA"/>
</dbReference>
<dbReference type="EMBL" id="AY692558">
    <property type="protein sequence ID" value="AAT92577.1"/>
    <property type="molecule type" value="Genomic_DNA"/>
</dbReference>
<dbReference type="EMBL" id="BK006945">
    <property type="protein sequence ID" value="DAA09717.1"/>
    <property type="molecule type" value="Genomic_DNA"/>
</dbReference>
<dbReference type="PIR" id="S59380">
    <property type="entry name" value="S59380"/>
</dbReference>
<dbReference type="RefSeq" id="NP_013518.3">
    <property type="nucleotide sequence ID" value="NM_001182302.3"/>
</dbReference>
<dbReference type="BioGRID" id="31673">
    <property type="interactions" value="93"/>
</dbReference>
<dbReference type="FunCoup" id="Q06991">
    <property type="interactions" value="125"/>
</dbReference>
<dbReference type="IntAct" id="Q06991">
    <property type="interactions" value="2"/>
</dbReference>
<dbReference type="STRING" id="4932.YLR414C"/>
<dbReference type="TCDB" id="1.H.1.4.2">
    <property type="family name" value="the claudin tight junction (claudin1) family"/>
</dbReference>
<dbReference type="GlyCosmos" id="Q06991">
    <property type="glycosylation" value="2 sites, No reported glycans"/>
</dbReference>
<dbReference type="GlyGen" id="Q06991">
    <property type="glycosylation" value="2 sites"/>
</dbReference>
<dbReference type="iPTMnet" id="Q06991"/>
<dbReference type="PaxDb" id="4932-YLR414C"/>
<dbReference type="PeptideAtlas" id="Q06991"/>
<dbReference type="TopDownProteomics" id="Q06991"/>
<dbReference type="EnsemblFungi" id="YLR414C_mRNA">
    <property type="protein sequence ID" value="YLR414C"/>
    <property type="gene ID" value="YLR414C"/>
</dbReference>
<dbReference type="GeneID" id="851132"/>
<dbReference type="KEGG" id="sce:YLR414C"/>
<dbReference type="AGR" id="SGD:S000004406"/>
<dbReference type="SGD" id="S000004406">
    <property type="gene designation" value="PUN1"/>
</dbReference>
<dbReference type="VEuPathDB" id="FungiDB:YLR414C"/>
<dbReference type="eggNOG" id="ENOG502S4UA">
    <property type="taxonomic scope" value="Eukaryota"/>
</dbReference>
<dbReference type="HOGENOM" id="CLU_1147965_0_0_1"/>
<dbReference type="InParanoid" id="Q06991"/>
<dbReference type="OMA" id="MNWAFVI"/>
<dbReference type="OrthoDB" id="4480814at2759"/>
<dbReference type="BioCyc" id="YEAST:G3O-32476-MONOMER"/>
<dbReference type="BioGRID-ORCS" id="851132">
    <property type="hits" value="0 hits in 10 CRISPR screens"/>
</dbReference>
<dbReference type="PRO" id="PR:Q06991"/>
<dbReference type="Proteomes" id="UP000002311">
    <property type="component" value="Chromosome XII"/>
</dbReference>
<dbReference type="RNAct" id="Q06991">
    <property type="molecule type" value="protein"/>
</dbReference>
<dbReference type="GO" id="GO:0051285">
    <property type="term" value="C:cell cortex of cell tip"/>
    <property type="evidence" value="ECO:0000318"/>
    <property type="project" value="GO_Central"/>
</dbReference>
<dbReference type="GO" id="GO:0071944">
    <property type="term" value="C:cell periphery"/>
    <property type="evidence" value="ECO:0007005"/>
    <property type="project" value="SGD"/>
</dbReference>
<dbReference type="GO" id="GO:0005933">
    <property type="term" value="C:cellular bud"/>
    <property type="evidence" value="ECO:0007005"/>
    <property type="project" value="SGD"/>
</dbReference>
<dbReference type="GO" id="GO:0005737">
    <property type="term" value="C:cytoplasm"/>
    <property type="evidence" value="ECO:0007005"/>
    <property type="project" value="SGD"/>
</dbReference>
<dbReference type="GO" id="GO:0005783">
    <property type="term" value="C:endoplasmic reticulum"/>
    <property type="evidence" value="ECO:0007005"/>
    <property type="project" value="SGD"/>
</dbReference>
<dbReference type="GO" id="GO:0005886">
    <property type="term" value="C:plasma membrane"/>
    <property type="evidence" value="ECO:0000314"/>
    <property type="project" value="SGD"/>
</dbReference>
<dbReference type="GO" id="GO:0031505">
    <property type="term" value="P:fungal-type cell wall organization"/>
    <property type="evidence" value="ECO:0000315"/>
    <property type="project" value="SGD"/>
</dbReference>
<dbReference type="InterPro" id="IPR017974">
    <property type="entry name" value="Claudin_CS"/>
</dbReference>
<dbReference type="InterPro" id="IPR009571">
    <property type="entry name" value="SUR7/Rim9-like_fungi"/>
</dbReference>
<dbReference type="InterPro" id="IPR052413">
    <property type="entry name" value="SUR7_domain"/>
</dbReference>
<dbReference type="PANTHER" id="PTHR28019">
    <property type="entry name" value="CELL MEMBRANE PROTEIN YLR413W-RELATED"/>
    <property type="match status" value="1"/>
</dbReference>
<dbReference type="PANTHER" id="PTHR28019:SF2">
    <property type="entry name" value="CELL MEMBRANE PROTEIN YLR413W-RELATED"/>
    <property type="match status" value="1"/>
</dbReference>
<dbReference type="Pfam" id="PF06687">
    <property type="entry name" value="SUR7"/>
    <property type="match status" value="1"/>
</dbReference>
<sequence>MRNFFTLFFAAIFSLGALILAIVACAGSTKNYSPINKIYCAELDLSQMKVSTVLPSLSSATLSSLGLPSYINIGLWSYCTVDSSHNIQSCSSPHGIQNFNLSSLVYDNINNNEALELMDSVASVVLPEKLKSKMTYYNNLVKCMFITILIGIVLTFVNLVFNVLRWIIHIRPLTWFGAFFSFFAFAALLVSIGSCLGTYSYIKYILKHNYSDYGISMSIGRNYQGLMWGAVVGALLNFILWCSVRSRPTVIYANAPIEEKPLI</sequence>
<name>PUN1_YEAST</name>
<organism>
    <name type="scientific">Saccharomyces cerevisiae (strain ATCC 204508 / S288c)</name>
    <name type="common">Baker's yeast</name>
    <dbReference type="NCBI Taxonomy" id="559292"/>
    <lineage>
        <taxon>Eukaryota</taxon>
        <taxon>Fungi</taxon>
        <taxon>Dikarya</taxon>
        <taxon>Ascomycota</taxon>
        <taxon>Saccharomycotina</taxon>
        <taxon>Saccharomycetes</taxon>
        <taxon>Saccharomycetales</taxon>
        <taxon>Saccharomycetaceae</taxon>
        <taxon>Saccharomyces</taxon>
    </lineage>
</organism>
<proteinExistence type="evidence at protein level"/>
<reference key="1">
    <citation type="journal article" date="1997" name="Nature">
        <title>The nucleotide sequence of Saccharomyces cerevisiae chromosome XII.</title>
        <authorList>
            <person name="Johnston M."/>
            <person name="Hillier L.W."/>
            <person name="Riles L."/>
            <person name="Albermann K."/>
            <person name="Andre B."/>
            <person name="Ansorge W."/>
            <person name="Benes V."/>
            <person name="Brueckner M."/>
            <person name="Delius H."/>
            <person name="Dubois E."/>
            <person name="Duesterhoeft A."/>
            <person name="Entian K.-D."/>
            <person name="Floeth M."/>
            <person name="Goffeau A."/>
            <person name="Hebling U."/>
            <person name="Heumann K."/>
            <person name="Heuss-Neitzel D."/>
            <person name="Hilbert H."/>
            <person name="Hilger F."/>
            <person name="Kleine K."/>
            <person name="Koetter P."/>
            <person name="Louis E.J."/>
            <person name="Messenguy F."/>
            <person name="Mewes H.-W."/>
            <person name="Miosga T."/>
            <person name="Moestl D."/>
            <person name="Mueller-Auer S."/>
            <person name="Nentwich U."/>
            <person name="Obermaier B."/>
            <person name="Piravandi E."/>
            <person name="Pohl T.M."/>
            <person name="Portetelle D."/>
            <person name="Purnelle B."/>
            <person name="Rechmann S."/>
            <person name="Rieger M."/>
            <person name="Rinke M."/>
            <person name="Rose M."/>
            <person name="Scharfe M."/>
            <person name="Scherens B."/>
            <person name="Scholler P."/>
            <person name="Schwager C."/>
            <person name="Schwarz S."/>
            <person name="Underwood A.P."/>
            <person name="Urrestarazu L.A."/>
            <person name="Vandenbol M."/>
            <person name="Verhasselt P."/>
            <person name="Vierendeels F."/>
            <person name="Voet M."/>
            <person name="Volckaert G."/>
            <person name="Voss H."/>
            <person name="Wambutt R."/>
            <person name="Wedler E."/>
            <person name="Wedler H."/>
            <person name="Zimmermann F.K."/>
            <person name="Zollner A."/>
            <person name="Hani J."/>
            <person name="Hoheisel J.D."/>
        </authorList>
    </citation>
    <scope>NUCLEOTIDE SEQUENCE [LARGE SCALE GENOMIC DNA]</scope>
    <source>
        <strain>ATCC 204508 / S288c</strain>
    </source>
</reference>
<reference key="2">
    <citation type="journal article" date="2014" name="G3 (Bethesda)">
        <title>The reference genome sequence of Saccharomyces cerevisiae: Then and now.</title>
        <authorList>
            <person name="Engel S.R."/>
            <person name="Dietrich F.S."/>
            <person name="Fisk D.G."/>
            <person name="Binkley G."/>
            <person name="Balakrishnan R."/>
            <person name="Costanzo M.C."/>
            <person name="Dwight S.S."/>
            <person name="Hitz B.C."/>
            <person name="Karra K."/>
            <person name="Nash R.S."/>
            <person name="Weng S."/>
            <person name="Wong E.D."/>
            <person name="Lloyd P."/>
            <person name="Skrzypek M.S."/>
            <person name="Miyasato S.R."/>
            <person name="Simison M."/>
            <person name="Cherry J.M."/>
        </authorList>
    </citation>
    <scope>GENOME REANNOTATION</scope>
    <source>
        <strain>ATCC 204508 / S288c</strain>
    </source>
</reference>
<reference key="3">
    <citation type="journal article" date="2007" name="Genome Res.">
        <title>Approaching a complete repository of sequence-verified protein-encoding clones for Saccharomyces cerevisiae.</title>
        <authorList>
            <person name="Hu Y."/>
            <person name="Rolfs A."/>
            <person name="Bhullar B."/>
            <person name="Murthy T.V.S."/>
            <person name="Zhu C."/>
            <person name="Berger M.F."/>
            <person name="Camargo A.A."/>
            <person name="Kelley F."/>
            <person name="McCarron S."/>
            <person name="Jepson D."/>
            <person name="Richardson A."/>
            <person name="Raphael J."/>
            <person name="Moreira D."/>
            <person name="Taycher E."/>
            <person name="Zuo D."/>
            <person name="Mohr S."/>
            <person name="Kane M.F."/>
            <person name="Williamson J."/>
            <person name="Simpson A.J.G."/>
            <person name="Bulyk M.L."/>
            <person name="Harlow E."/>
            <person name="Marsischky G."/>
            <person name="Kolodner R.D."/>
            <person name="LaBaer J."/>
        </authorList>
    </citation>
    <scope>NUCLEOTIDE SEQUENCE [GENOMIC DNA]</scope>
    <source>
        <strain>ATCC 204508 / S288c</strain>
    </source>
</reference>
<reference key="4">
    <citation type="journal article" date="2003" name="Nature">
        <title>Global analysis of protein localization in budding yeast.</title>
        <authorList>
            <person name="Huh W.-K."/>
            <person name="Falvo J.V."/>
            <person name="Gerke L.C."/>
            <person name="Carroll A.S."/>
            <person name="Howson R.W."/>
            <person name="Weissman J.S."/>
            <person name="O'Shea E.K."/>
        </authorList>
    </citation>
    <scope>SUBCELLULAR LOCATION [LARGE SCALE ANALYSIS]</scope>
</reference>
<reference key="5">
    <citation type="journal article" date="2003" name="Nature">
        <title>Global analysis of protein expression in yeast.</title>
        <authorList>
            <person name="Ghaemmaghami S."/>
            <person name="Huh W.-K."/>
            <person name="Bower K."/>
            <person name="Howson R.W."/>
            <person name="Belle A."/>
            <person name="Dephoure N."/>
            <person name="O'Shea E.K."/>
            <person name="Weissman J.S."/>
        </authorList>
    </citation>
    <scope>LEVEL OF PROTEIN EXPRESSION [LARGE SCALE ANALYSIS]</scope>
</reference>
<reference key="6">
    <citation type="journal article" date="2003" name="Proc. Natl. Acad. Sci. U.S.A.">
        <title>A subset of membrane-associated proteins is ubiquitinated in response to mutations in the endoplasmic reticulum degradation machinery.</title>
        <authorList>
            <person name="Hitchcock A.L."/>
            <person name="Auld K."/>
            <person name="Gygi S.P."/>
            <person name="Silver P.A."/>
        </authorList>
    </citation>
    <scope>UBIQUITINATION [LARGE SCALE ANALYSIS] AT LYS-260</scope>
    <scope>IDENTIFICATION BY MASS SPECTROMETRY</scope>
</reference>
<reference key="7">
    <citation type="journal article" date="2004" name="Yeast">
        <title>Characterization of the transcriptional response to cell wall stress in Saccharomyces cerevisiae.</title>
        <authorList>
            <person name="Boorsma A."/>
            <person name="de Nobel H."/>
            <person name="ter Riet B."/>
            <person name="Bargmann B."/>
            <person name="Brul S."/>
            <person name="Hellingwerf K.J."/>
            <person name="Klis F.M."/>
        </authorList>
    </citation>
    <scope>INDUCTION</scope>
</reference>
<reference key="8">
    <citation type="journal article" date="2005" name="Microbiology">
        <title>The 'yeast cell wall chip' - a tool to analyse the regulation of cell wall biogenesis in Saccharomyces cerevisiae.</title>
        <authorList>
            <person name="Rodriguez-Pena J.M."/>
            <person name="Perez-Diaz R.M."/>
            <person name="Alvarez S."/>
            <person name="Bermejo C."/>
            <person name="Garcia R."/>
            <person name="Santiago C."/>
            <person name="Nombela C."/>
            <person name="Arroyo J."/>
        </authorList>
    </citation>
    <scope>INDUCTION</scope>
</reference>
<reference key="9">
    <citation type="journal article" date="2006" name="Proc. Natl. Acad. Sci. U.S.A.">
        <title>A global topology map of the Saccharomyces cerevisiae membrane proteome.</title>
        <authorList>
            <person name="Kim H."/>
            <person name="Melen K."/>
            <person name="Oesterberg M."/>
            <person name="von Heijne G."/>
        </authorList>
    </citation>
    <scope>TOPOLOGY [LARGE SCALE ANALYSIS]</scope>
    <source>
        <strain>ATCC 208353 / W303-1A</strain>
    </source>
</reference>
<reference key="10">
    <citation type="journal article" date="2008" name="Mol. Biol. Cell">
        <title>The Sur7 protein regulates plasma membrane organization and prevents intracellular cell wall growth in Candida albicans.</title>
        <authorList>
            <person name="Alvarez F.J."/>
            <person name="Douglas L.M."/>
            <person name="Rosebrock A."/>
            <person name="Konopka J.B."/>
        </authorList>
    </citation>
    <scope>SUBCELLULAR LOCATION</scope>
</reference>
<reference key="11">
    <citation type="journal article" date="2009" name="Mol. Syst. Biol.">
        <title>Global analysis of the glycoproteome in Saccharomyces cerevisiae reveals new roles for protein glycosylation in eukaryotes.</title>
        <authorList>
            <person name="Kung L.A."/>
            <person name="Tao S.-C."/>
            <person name="Qian J."/>
            <person name="Smith M.G."/>
            <person name="Snyder M."/>
            <person name="Zhu H."/>
        </authorList>
    </citation>
    <scope>GLYCOSYLATION [LARGE SCALE ANALYSIS]</scope>
</reference>
<reference key="12">
    <citation type="journal article" date="2010" name="J. Biol. Chem.">
        <title>A profile of differentially abundant proteins at the yeast cell periphery during pseudohyphal growth.</title>
        <authorList>
            <person name="Xu T."/>
            <person name="Shively C.A."/>
            <person name="Jin R."/>
            <person name="Eckwahl M.J."/>
            <person name="Dobry C.J."/>
            <person name="Song Q."/>
            <person name="Kumar A."/>
        </authorList>
    </citation>
    <scope>INDUCTION</scope>
    <scope>FUNCTION</scope>
    <scope>SUBCELLULAR LOCATION</scope>
    <scope>IDENTIFICATION BY MASS SPECTROMETRY</scope>
</reference>
<reference key="13">
    <citation type="journal article" date="2012" name="Proteomics">
        <title>Sites of ubiquitin attachment in Saccharomyces cerevisiae.</title>
        <authorList>
            <person name="Starita L.M."/>
            <person name="Lo R.S."/>
            <person name="Eng J.K."/>
            <person name="von Haller P.D."/>
            <person name="Fields S."/>
        </authorList>
    </citation>
    <scope>UBIQUITINATION [LARGE SCALE ANALYSIS] AT LYS-260</scope>
    <scope>IDENTIFICATION BY MASS SPECTROMETRY [LARGE SCALE ANALYSIS]</scope>
</reference>
<keyword id="KW-1003">Cell membrane</keyword>
<keyword id="KW-0325">Glycoprotein</keyword>
<keyword id="KW-1017">Isopeptide bond</keyword>
<keyword id="KW-0472">Membrane</keyword>
<keyword id="KW-1185">Reference proteome</keyword>
<keyword id="KW-0812">Transmembrane</keyword>
<keyword id="KW-1133">Transmembrane helix</keyword>
<keyword id="KW-0832">Ubl conjugation</keyword>
<protein>
    <recommendedName>
        <fullName>Protein PUN1</fullName>
    </recommendedName>
    <alternativeName>
        <fullName>Plasma membrane protein up-regulated during nitrogen stress 1</fullName>
    </alternativeName>
</protein>